<keyword id="KW-0963">Cytoplasm</keyword>
<keyword id="KW-0489">Methyltransferase</keyword>
<keyword id="KW-0949">S-adenosyl-L-methionine</keyword>
<keyword id="KW-0808">Transferase</keyword>
<keyword id="KW-0819">tRNA processing</keyword>
<organism>
    <name type="scientific">Shewanella sp. (strain MR-4)</name>
    <dbReference type="NCBI Taxonomy" id="60480"/>
    <lineage>
        <taxon>Bacteria</taxon>
        <taxon>Pseudomonadati</taxon>
        <taxon>Pseudomonadota</taxon>
        <taxon>Gammaproteobacteria</taxon>
        <taxon>Alteromonadales</taxon>
        <taxon>Shewanellaceae</taxon>
        <taxon>Shewanella</taxon>
    </lineage>
</organism>
<name>TRMN6_SHESM</name>
<protein>
    <recommendedName>
        <fullName evidence="1">tRNA1(Val) (adenine(37)-N6)-methyltransferase</fullName>
        <ecNumber evidence="1">2.1.1.223</ecNumber>
    </recommendedName>
    <alternativeName>
        <fullName evidence="1">tRNA m6A37 methyltransferase</fullName>
    </alternativeName>
</protein>
<accession>Q0HM44</accession>
<dbReference type="EC" id="2.1.1.223" evidence="1"/>
<dbReference type="EMBL" id="CP000446">
    <property type="protein sequence ID" value="ABI37873.1"/>
    <property type="molecule type" value="Genomic_DNA"/>
</dbReference>
<dbReference type="RefSeq" id="WP_011621588.1">
    <property type="nucleotide sequence ID" value="NC_008321.1"/>
</dbReference>
<dbReference type="SMR" id="Q0HM44"/>
<dbReference type="KEGG" id="she:Shewmr4_0793"/>
<dbReference type="HOGENOM" id="CLU_061983_0_0_6"/>
<dbReference type="GO" id="GO:0005737">
    <property type="term" value="C:cytoplasm"/>
    <property type="evidence" value="ECO:0007669"/>
    <property type="project" value="UniProtKB-SubCell"/>
</dbReference>
<dbReference type="GO" id="GO:0003676">
    <property type="term" value="F:nucleic acid binding"/>
    <property type="evidence" value="ECO:0007669"/>
    <property type="project" value="InterPro"/>
</dbReference>
<dbReference type="GO" id="GO:0016430">
    <property type="term" value="F:tRNA (adenine-N6)-methyltransferase activity"/>
    <property type="evidence" value="ECO:0007669"/>
    <property type="project" value="UniProtKB-UniRule"/>
</dbReference>
<dbReference type="GO" id="GO:0032259">
    <property type="term" value="P:methylation"/>
    <property type="evidence" value="ECO:0007669"/>
    <property type="project" value="UniProtKB-KW"/>
</dbReference>
<dbReference type="GO" id="GO:0008033">
    <property type="term" value="P:tRNA processing"/>
    <property type="evidence" value="ECO:0007669"/>
    <property type="project" value="UniProtKB-UniRule"/>
</dbReference>
<dbReference type="CDD" id="cd02440">
    <property type="entry name" value="AdoMet_MTases"/>
    <property type="match status" value="1"/>
</dbReference>
<dbReference type="Gene3D" id="3.40.50.150">
    <property type="entry name" value="Vaccinia Virus protein VP39"/>
    <property type="match status" value="1"/>
</dbReference>
<dbReference type="HAMAP" id="MF_01872">
    <property type="entry name" value="tRNA_methyltr_YfiC"/>
    <property type="match status" value="1"/>
</dbReference>
<dbReference type="InterPro" id="IPR002052">
    <property type="entry name" value="DNA_methylase_N6_adenine_CS"/>
</dbReference>
<dbReference type="InterPro" id="IPR029063">
    <property type="entry name" value="SAM-dependent_MTases_sf"/>
</dbReference>
<dbReference type="InterPro" id="IPR007848">
    <property type="entry name" value="Small_mtfrase_dom"/>
</dbReference>
<dbReference type="InterPro" id="IPR050210">
    <property type="entry name" value="tRNA_Adenine-N(6)_MTase"/>
</dbReference>
<dbReference type="InterPro" id="IPR022882">
    <property type="entry name" value="tRNA_adenine-N6_MeTrfase"/>
</dbReference>
<dbReference type="PANTHER" id="PTHR47739">
    <property type="entry name" value="TRNA1(VAL) (ADENINE(37)-N6)-METHYLTRANSFERASE"/>
    <property type="match status" value="1"/>
</dbReference>
<dbReference type="PANTHER" id="PTHR47739:SF1">
    <property type="entry name" value="TRNA1(VAL) (ADENINE(37)-N6)-METHYLTRANSFERASE"/>
    <property type="match status" value="1"/>
</dbReference>
<dbReference type="Pfam" id="PF05175">
    <property type="entry name" value="MTS"/>
    <property type="match status" value="1"/>
</dbReference>
<dbReference type="SUPFAM" id="SSF53335">
    <property type="entry name" value="S-adenosyl-L-methionine-dependent methyltransferases"/>
    <property type="match status" value="1"/>
</dbReference>
<dbReference type="PROSITE" id="PS00092">
    <property type="entry name" value="N6_MTASE"/>
    <property type="match status" value="1"/>
</dbReference>
<proteinExistence type="inferred from homology"/>
<reference key="1">
    <citation type="submission" date="2006-08" db="EMBL/GenBank/DDBJ databases">
        <title>Complete sequence of Shewanella sp. MR-4.</title>
        <authorList>
            <consortium name="US DOE Joint Genome Institute"/>
            <person name="Copeland A."/>
            <person name="Lucas S."/>
            <person name="Lapidus A."/>
            <person name="Barry K."/>
            <person name="Detter J.C."/>
            <person name="Glavina del Rio T."/>
            <person name="Hammon N."/>
            <person name="Israni S."/>
            <person name="Dalin E."/>
            <person name="Tice H."/>
            <person name="Pitluck S."/>
            <person name="Kiss H."/>
            <person name="Brettin T."/>
            <person name="Bruce D."/>
            <person name="Han C."/>
            <person name="Tapia R."/>
            <person name="Gilna P."/>
            <person name="Schmutz J."/>
            <person name="Larimer F."/>
            <person name="Land M."/>
            <person name="Hauser L."/>
            <person name="Kyrpides N."/>
            <person name="Mikhailova N."/>
            <person name="Nealson K."/>
            <person name="Konstantinidis K."/>
            <person name="Klappenbach J."/>
            <person name="Tiedje J."/>
            <person name="Richardson P."/>
        </authorList>
    </citation>
    <scope>NUCLEOTIDE SEQUENCE [LARGE SCALE GENOMIC DNA]</scope>
    <source>
        <strain>MR-4</strain>
    </source>
</reference>
<gene>
    <name type="ordered locus">Shewmr4_0793</name>
</gene>
<comment type="function">
    <text evidence="1">Specifically methylates the adenine in position 37 of tRNA(1)(Val) (anticodon cmo5UAC).</text>
</comment>
<comment type="catalytic activity">
    <reaction evidence="1">
        <text>adenosine(37) in tRNA1(Val) + S-adenosyl-L-methionine = N(6)-methyladenosine(37) in tRNA1(Val) + S-adenosyl-L-homocysteine + H(+)</text>
        <dbReference type="Rhea" id="RHEA:43160"/>
        <dbReference type="Rhea" id="RHEA-COMP:10369"/>
        <dbReference type="Rhea" id="RHEA-COMP:10370"/>
        <dbReference type="ChEBI" id="CHEBI:15378"/>
        <dbReference type="ChEBI" id="CHEBI:57856"/>
        <dbReference type="ChEBI" id="CHEBI:59789"/>
        <dbReference type="ChEBI" id="CHEBI:74411"/>
        <dbReference type="ChEBI" id="CHEBI:74449"/>
        <dbReference type="EC" id="2.1.1.223"/>
    </reaction>
</comment>
<comment type="subcellular location">
    <subcellularLocation>
        <location evidence="1">Cytoplasm</location>
    </subcellularLocation>
</comment>
<comment type="similarity">
    <text evidence="1">Belongs to the methyltransferase superfamily. tRNA (adenine-N(6)-)-methyltransferase family.</text>
</comment>
<evidence type="ECO:0000255" key="1">
    <source>
        <dbReference type="HAMAP-Rule" id="MF_01872"/>
    </source>
</evidence>
<sequence>MAFTFKQFHIDDLNCGMPVSTDGVILGAWAPLAEAKNILDIGAGSGLLSLMAAQRSQGQITAVELEEKAAAACRYNMTQSPWAKRCQLVHGDIQSVCQLAQYQGYFDHIICNPPYFEHGPKASEQHRAMARHTETLGFTPLLDAISQCLSFEGYASLILPIQSLARFKACLNDTALYLVREVWVKSVENKAANRALLLLSKTEVEPYQRTDLTIRGEDGNYTEQMIELTKDFYLKL</sequence>
<feature type="chain" id="PRO_0000387429" description="tRNA1(Val) (adenine(37)-N6)-methyltransferase">
    <location>
        <begin position="1"/>
        <end position="236"/>
    </location>
</feature>